<sequence>MVFEGHLVGTGLKVGVVVGRFNEFITSKLLGGALDGLKRHGVEENDIDVAWVPGAFEIPLIAKKMANSGKYDAVITLGTVIRGATTHYDYVCNEVAKGVASLSLQTDIPVIFGVLTTETIEQAIERAGTKAGNKGYESAVAAIEMAHLSKHWA</sequence>
<keyword id="KW-0686">Riboflavin biosynthesis</keyword>
<keyword id="KW-0808">Transferase</keyword>
<gene>
    <name evidence="1" type="primary">ribH</name>
    <name type="ordered locus">BAMEG_4375</name>
</gene>
<reference key="1">
    <citation type="submission" date="2008-10" db="EMBL/GenBank/DDBJ databases">
        <title>Genome sequence of Bacillus anthracis str. CDC 684.</title>
        <authorList>
            <person name="Dodson R.J."/>
            <person name="Munk A.C."/>
            <person name="Brettin T."/>
            <person name="Bruce D."/>
            <person name="Detter C."/>
            <person name="Tapia R."/>
            <person name="Han C."/>
            <person name="Sutton G."/>
            <person name="Sims D."/>
        </authorList>
    </citation>
    <scope>NUCLEOTIDE SEQUENCE [LARGE SCALE GENOMIC DNA]</scope>
    <source>
        <strain>CDC 684 / NRRL 3495</strain>
    </source>
</reference>
<feature type="chain" id="PRO_1000195456" description="6,7-dimethyl-8-ribityllumazine synthase">
    <location>
        <begin position="1"/>
        <end position="153"/>
    </location>
</feature>
<feature type="active site" description="Proton donor" evidence="1">
    <location>
        <position position="87"/>
    </location>
</feature>
<feature type="binding site" evidence="1">
    <location>
        <position position="21"/>
    </location>
    <ligand>
        <name>5-amino-6-(D-ribitylamino)uracil</name>
        <dbReference type="ChEBI" id="CHEBI:15934"/>
    </ligand>
</feature>
<feature type="binding site" evidence="1">
    <location>
        <begin position="55"/>
        <end position="57"/>
    </location>
    <ligand>
        <name>5-amino-6-(D-ribitylamino)uracil</name>
        <dbReference type="ChEBI" id="CHEBI:15934"/>
    </ligand>
</feature>
<feature type="binding site" evidence="1">
    <location>
        <begin position="79"/>
        <end position="81"/>
    </location>
    <ligand>
        <name>5-amino-6-(D-ribitylamino)uracil</name>
        <dbReference type="ChEBI" id="CHEBI:15934"/>
    </ligand>
</feature>
<feature type="binding site" evidence="1">
    <location>
        <begin position="84"/>
        <end position="85"/>
    </location>
    <ligand>
        <name>(2S)-2-hydroxy-3-oxobutyl phosphate</name>
        <dbReference type="ChEBI" id="CHEBI:58830"/>
    </ligand>
</feature>
<feature type="binding site" evidence="1">
    <location>
        <position position="112"/>
    </location>
    <ligand>
        <name>5-amino-6-(D-ribitylamino)uracil</name>
        <dbReference type="ChEBI" id="CHEBI:15934"/>
    </ligand>
</feature>
<feature type="binding site" evidence="1">
    <location>
        <position position="126"/>
    </location>
    <ligand>
        <name>(2S)-2-hydroxy-3-oxobutyl phosphate</name>
        <dbReference type="ChEBI" id="CHEBI:58830"/>
    </ligand>
</feature>
<evidence type="ECO:0000255" key="1">
    <source>
        <dbReference type="HAMAP-Rule" id="MF_00178"/>
    </source>
</evidence>
<name>RISB_BACAC</name>
<proteinExistence type="inferred from homology"/>
<protein>
    <recommendedName>
        <fullName evidence="1">6,7-dimethyl-8-ribityllumazine synthase</fullName>
        <shortName evidence="1">DMRL synthase</shortName>
        <shortName evidence="1">LS</shortName>
        <shortName evidence="1">Lumazine synthase</shortName>
        <ecNumber evidence="1">2.5.1.78</ecNumber>
    </recommendedName>
</protein>
<accession>C3LIX8</accession>
<comment type="function">
    <text evidence="1">Catalyzes the formation of 6,7-dimethyl-8-ribityllumazine by condensation of 5-amino-6-(D-ribitylamino)uracil with 3,4-dihydroxy-2-butanone 4-phosphate. This is the penultimate step in the biosynthesis of riboflavin.</text>
</comment>
<comment type="catalytic activity">
    <reaction evidence="1">
        <text>(2S)-2-hydroxy-3-oxobutyl phosphate + 5-amino-6-(D-ribitylamino)uracil = 6,7-dimethyl-8-(1-D-ribityl)lumazine + phosphate + 2 H2O + H(+)</text>
        <dbReference type="Rhea" id="RHEA:26152"/>
        <dbReference type="ChEBI" id="CHEBI:15377"/>
        <dbReference type="ChEBI" id="CHEBI:15378"/>
        <dbReference type="ChEBI" id="CHEBI:15934"/>
        <dbReference type="ChEBI" id="CHEBI:43474"/>
        <dbReference type="ChEBI" id="CHEBI:58201"/>
        <dbReference type="ChEBI" id="CHEBI:58830"/>
        <dbReference type="EC" id="2.5.1.78"/>
    </reaction>
</comment>
<comment type="pathway">
    <text evidence="1">Cofactor biosynthesis; riboflavin biosynthesis; riboflavin from 2-hydroxy-3-oxobutyl phosphate and 5-amino-6-(D-ribitylamino)uracil: step 1/2.</text>
</comment>
<comment type="subunit">
    <text evidence="1">Forms an icosahedral capsid composed of 60 subunits, arranged as a dodecamer of pentamers.</text>
</comment>
<comment type="similarity">
    <text evidence="1">Belongs to the DMRL synthase family.</text>
</comment>
<dbReference type="EC" id="2.5.1.78" evidence="1"/>
<dbReference type="EMBL" id="CP001215">
    <property type="protein sequence ID" value="ACP14012.1"/>
    <property type="molecule type" value="Genomic_DNA"/>
</dbReference>
<dbReference type="RefSeq" id="WP_000230891.1">
    <property type="nucleotide sequence ID" value="NC_012581.1"/>
</dbReference>
<dbReference type="SMR" id="C3LIX8"/>
<dbReference type="GeneID" id="45024001"/>
<dbReference type="KEGG" id="bah:BAMEG_4375"/>
<dbReference type="HOGENOM" id="CLU_089358_1_1_9"/>
<dbReference type="UniPathway" id="UPA00275">
    <property type="reaction ID" value="UER00404"/>
</dbReference>
<dbReference type="GO" id="GO:0005829">
    <property type="term" value="C:cytosol"/>
    <property type="evidence" value="ECO:0007669"/>
    <property type="project" value="TreeGrafter"/>
</dbReference>
<dbReference type="GO" id="GO:0009349">
    <property type="term" value="C:riboflavin synthase complex"/>
    <property type="evidence" value="ECO:0007669"/>
    <property type="project" value="InterPro"/>
</dbReference>
<dbReference type="GO" id="GO:0000906">
    <property type="term" value="F:6,7-dimethyl-8-ribityllumazine synthase activity"/>
    <property type="evidence" value="ECO:0007669"/>
    <property type="project" value="UniProtKB-UniRule"/>
</dbReference>
<dbReference type="GO" id="GO:0009231">
    <property type="term" value="P:riboflavin biosynthetic process"/>
    <property type="evidence" value="ECO:0007669"/>
    <property type="project" value="UniProtKB-UniRule"/>
</dbReference>
<dbReference type="CDD" id="cd09209">
    <property type="entry name" value="Lumazine_synthase-I"/>
    <property type="match status" value="1"/>
</dbReference>
<dbReference type="FunFam" id="3.40.50.960:FF:000001">
    <property type="entry name" value="6,7-dimethyl-8-ribityllumazine synthase"/>
    <property type="match status" value="1"/>
</dbReference>
<dbReference type="Gene3D" id="3.40.50.960">
    <property type="entry name" value="Lumazine/riboflavin synthase"/>
    <property type="match status" value="1"/>
</dbReference>
<dbReference type="HAMAP" id="MF_00178">
    <property type="entry name" value="Lumazine_synth"/>
    <property type="match status" value="1"/>
</dbReference>
<dbReference type="InterPro" id="IPR034964">
    <property type="entry name" value="LS"/>
</dbReference>
<dbReference type="InterPro" id="IPR002180">
    <property type="entry name" value="LS/RS"/>
</dbReference>
<dbReference type="InterPro" id="IPR036467">
    <property type="entry name" value="LS/RS_sf"/>
</dbReference>
<dbReference type="NCBIfam" id="TIGR00114">
    <property type="entry name" value="lumazine-synth"/>
    <property type="match status" value="1"/>
</dbReference>
<dbReference type="NCBIfam" id="NF000812">
    <property type="entry name" value="PRK00061.1-4"/>
    <property type="match status" value="1"/>
</dbReference>
<dbReference type="PANTHER" id="PTHR21058:SF0">
    <property type="entry name" value="6,7-DIMETHYL-8-RIBITYLLUMAZINE SYNTHASE"/>
    <property type="match status" value="1"/>
</dbReference>
<dbReference type="PANTHER" id="PTHR21058">
    <property type="entry name" value="6,7-DIMETHYL-8-RIBITYLLUMAZINE SYNTHASE DMRL SYNTHASE LUMAZINE SYNTHASE"/>
    <property type="match status" value="1"/>
</dbReference>
<dbReference type="Pfam" id="PF00885">
    <property type="entry name" value="DMRL_synthase"/>
    <property type="match status" value="1"/>
</dbReference>
<dbReference type="SUPFAM" id="SSF52121">
    <property type="entry name" value="Lumazine synthase"/>
    <property type="match status" value="1"/>
</dbReference>
<organism>
    <name type="scientific">Bacillus anthracis (strain CDC 684 / NRRL 3495)</name>
    <dbReference type="NCBI Taxonomy" id="568206"/>
    <lineage>
        <taxon>Bacteria</taxon>
        <taxon>Bacillati</taxon>
        <taxon>Bacillota</taxon>
        <taxon>Bacilli</taxon>
        <taxon>Bacillales</taxon>
        <taxon>Bacillaceae</taxon>
        <taxon>Bacillus</taxon>
        <taxon>Bacillus cereus group</taxon>
    </lineage>
</organism>